<accession>Q75B82</accession>
<organism>
    <name type="scientific">Eremothecium gossypii (strain ATCC 10895 / CBS 109.51 / FGSC 9923 / NRRL Y-1056)</name>
    <name type="common">Yeast</name>
    <name type="synonym">Ashbya gossypii</name>
    <dbReference type="NCBI Taxonomy" id="284811"/>
    <lineage>
        <taxon>Eukaryota</taxon>
        <taxon>Fungi</taxon>
        <taxon>Dikarya</taxon>
        <taxon>Ascomycota</taxon>
        <taxon>Saccharomycotina</taxon>
        <taxon>Saccharomycetes</taxon>
        <taxon>Saccharomycetales</taxon>
        <taxon>Saccharomycetaceae</taxon>
        <taxon>Eremothecium</taxon>
    </lineage>
</organism>
<protein>
    <recommendedName>
        <fullName>Non-histone chromosomal protein 6</fullName>
    </recommendedName>
</protein>
<sequence length="94" mass="10642">MAAAATTKKRTQRKKKDPNAPKRAMSAYMFFANENRDIVRAENPGISFGQVGRVLGEKWKALSDDEKQPYEAKAEADKKRYESEKELYNATKAA</sequence>
<gene>
    <name type="primary">NHP6</name>
    <name type="ordered locus">ADL310W</name>
</gene>
<comment type="function">
    <text evidence="1">DNA-binding protein that induces severe bending of DNA. Required for DNA-binding by the FACT complex, a general chromatin factor that acts to reorganize nucleosomes. The FACT complex is involved in multiple processes that require DNA as a template such as mRNA elongation, DNA replication and DNA repair. Also augments the fidelity of transcription by RNA polymerase III independently of any role in the FACT complex (By similarity).</text>
</comment>
<comment type="subunit">
    <text evidence="1">Weakly associates with the stable SPT16-POB3 heterodimer to form the FACT complex.</text>
</comment>
<comment type="subcellular location">
    <subcellularLocation>
        <location evidence="2">Nucleus</location>
    </subcellularLocation>
    <subcellularLocation>
        <location evidence="1">Chromosome</location>
    </subcellularLocation>
</comment>
<comment type="similarity">
    <text evidence="4">Belongs to the NHP6 family.</text>
</comment>
<reference key="1">
    <citation type="journal article" date="2004" name="Science">
        <title>The Ashbya gossypii genome as a tool for mapping the ancient Saccharomyces cerevisiae genome.</title>
        <authorList>
            <person name="Dietrich F.S."/>
            <person name="Voegeli S."/>
            <person name="Brachat S."/>
            <person name="Lerch A."/>
            <person name="Gates K."/>
            <person name="Steiner S."/>
            <person name="Mohr C."/>
            <person name="Poehlmann R."/>
            <person name="Luedi P."/>
            <person name="Choi S."/>
            <person name="Wing R.A."/>
            <person name="Flavier A."/>
            <person name="Gaffney T.D."/>
            <person name="Philippsen P."/>
        </authorList>
    </citation>
    <scope>NUCLEOTIDE SEQUENCE [LARGE SCALE GENOMIC DNA]</scope>
    <source>
        <strain>ATCC 10895 / CBS 109.51 / FGSC 9923 / NRRL Y-1056</strain>
    </source>
</reference>
<reference key="2">
    <citation type="journal article" date="2013" name="G3 (Bethesda)">
        <title>Genomes of Ashbya fungi isolated from insects reveal four mating-type loci, numerous translocations, lack of transposons, and distinct gene duplications.</title>
        <authorList>
            <person name="Dietrich F.S."/>
            <person name="Voegeli S."/>
            <person name="Kuo S."/>
            <person name="Philippsen P."/>
        </authorList>
    </citation>
    <scope>GENOME REANNOTATION</scope>
    <source>
        <strain>ATCC 10895 / CBS 109.51 / FGSC 9923 / NRRL Y-1056</strain>
    </source>
</reference>
<evidence type="ECO:0000250" key="1"/>
<evidence type="ECO:0000255" key="2">
    <source>
        <dbReference type="PROSITE-ProRule" id="PRU00267"/>
    </source>
</evidence>
<evidence type="ECO:0000256" key="3">
    <source>
        <dbReference type="SAM" id="MobiDB-lite"/>
    </source>
</evidence>
<evidence type="ECO:0000305" key="4"/>
<keyword id="KW-0158">Chromosome</keyword>
<keyword id="KW-0227">DNA damage</keyword>
<keyword id="KW-0234">DNA repair</keyword>
<keyword id="KW-0238">DNA-binding</keyword>
<keyword id="KW-0539">Nucleus</keyword>
<keyword id="KW-1185">Reference proteome</keyword>
<keyword id="KW-0804">Transcription</keyword>
<keyword id="KW-0805">Transcription regulation</keyword>
<name>NHP6_EREGS</name>
<dbReference type="EMBL" id="AE016817">
    <property type="protein sequence ID" value="AAS51610.1"/>
    <property type="molecule type" value="Genomic_DNA"/>
</dbReference>
<dbReference type="RefSeq" id="NP_983786.1">
    <property type="nucleotide sequence ID" value="NM_209139.2"/>
</dbReference>
<dbReference type="SMR" id="Q75B82"/>
<dbReference type="FunCoup" id="Q75B82">
    <property type="interactions" value="466"/>
</dbReference>
<dbReference type="STRING" id="284811.Q75B82"/>
<dbReference type="EnsemblFungi" id="AAS51610">
    <property type="protein sequence ID" value="AAS51610"/>
    <property type="gene ID" value="AGOS_ADL310W"/>
</dbReference>
<dbReference type="GeneID" id="4619921"/>
<dbReference type="KEGG" id="ago:AGOS_ADL310W"/>
<dbReference type="eggNOG" id="KOG0381">
    <property type="taxonomic scope" value="Eukaryota"/>
</dbReference>
<dbReference type="HOGENOM" id="CLU_082854_10_3_1"/>
<dbReference type="InParanoid" id="Q75B82"/>
<dbReference type="OMA" id="MKNMGGK"/>
<dbReference type="OrthoDB" id="1919336at2759"/>
<dbReference type="Proteomes" id="UP000000591">
    <property type="component" value="Chromosome IV"/>
</dbReference>
<dbReference type="GO" id="GO:0005694">
    <property type="term" value="C:chromosome"/>
    <property type="evidence" value="ECO:0007669"/>
    <property type="project" value="UniProtKB-SubCell"/>
</dbReference>
<dbReference type="GO" id="GO:0005634">
    <property type="term" value="C:nucleus"/>
    <property type="evidence" value="ECO:0007669"/>
    <property type="project" value="UniProtKB-SubCell"/>
</dbReference>
<dbReference type="GO" id="GO:0003677">
    <property type="term" value="F:DNA binding"/>
    <property type="evidence" value="ECO:0007669"/>
    <property type="project" value="UniProtKB-KW"/>
</dbReference>
<dbReference type="GO" id="GO:0006281">
    <property type="term" value="P:DNA repair"/>
    <property type="evidence" value="ECO:0007669"/>
    <property type="project" value="UniProtKB-KW"/>
</dbReference>
<dbReference type="CDD" id="cd01390">
    <property type="entry name" value="HMG-box_NHP6-like"/>
    <property type="match status" value="1"/>
</dbReference>
<dbReference type="FunFam" id="1.10.30.10:FF:000016">
    <property type="entry name" value="FACT complex subunit SSRP1"/>
    <property type="match status" value="1"/>
</dbReference>
<dbReference type="Gene3D" id="1.10.30.10">
    <property type="entry name" value="High mobility group box domain"/>
    <property type="match status" value="1"/>
</dbReference>
<dbReference type="InterPro" id="IPR009071">
    <property type="entry name" value="HMG_box_dom"/>
</dbReference>
<dbReference type="InterPro" id="IPR036910">
    <property type="entry name" value="HMG_box_dom_sf"/>
</dbReference>
<dbReference type="InterPro" id="IPR050342">
    <property type="entry name" value="HMGB"/>
</dbReference>
<dbReference type="PANTHER" id="PTHR48112">
    <property type="entry name" value="HIGH MOBILITY GROUP PROTEIN DSP1"/>
    <property type="match status" value="1"/>
</dbReference>
<dbReference type="PANTHER" id="PTHR48112:SF22">
    <property type="entry name" value="MITOCHONDRIAL TRANSCRIPTION FACTOR A, ISOFORM B"/>
    <property type="match status" value="1"/>
</dbReference>
<dbReference type="Pfam" id="PF00505">
    <property type="entry name" value="HMG_box"/>
    <property type="match status" value="1"/>
</dbReference>
<dbReference type="SMART" id="SM00398">
    <property type="entry name" value="HMG"/>
    <property type="match status" value="1"/>
</dbReference>
<dbReference type="SUPFAM" id="SSF47095">
    <property type="entry name" value="HMG-box"/>
    <property type="match status" value="1"/>
</dbReference>
<dbReference type="PROSITE" id="PS50118">
    <property type="entry name" value="HMG_BOX_2"/>
    <property type="match status" value="1"/>
</dbReference>
<feature type="chain" id="PRO_0000245213" description="Non-histone chromosomal protein 6">
    <location>
        <begin position="1"/>
        <end position="94"/>
    </location>
</feature>
<feature type="DNA-binding region" description="HMG box" evidence="2">
    <location>
        <begin position="21"/>
        <end position="89"/>
    </location>
</feature>
<feature type="region of interest" description="Disordered" evidence="3">
    <location>
        <begin position="1"/>
        <end position="23"/>
    </location>
</feature>
<feature type="region of interest" description="Disordered" evidence="3">
    <location>
        <begin position="64"/>
        <end position="94"/>
    </location>
</feature>
<feature type="compositionally biased region" description="Basic residues" evidence="3">
    <location>
        <begin position="7"/>
        <end position="16"/>
    </location>
</feature>
<feature type="compositionally biased region" description="Basic and acidic residues" evidence="3">
    <location>
        <begin position="64"/>
        <end position="87"/>
    </location>
</feature>
<proteinExistence type="inferred from homology"/>